<proteinExistence type="inferred from homology"/>
<dbReference type="EC" id="1.2.1.41" evidence="1"/>
<dbReference type="EMBL" id="AE004091">
    <property type="protein sequence ID" value="AAG07394.1"/>
    <property type="molecule type" value="Genomic_DNA"/>
</dbReference>
<dbReference type="PIR" id="C83147">
    <property type="entry name" value="C83147"/>
</dbReference>
<dbReference type="RefSeq" id="NP_252696.1">
    <property type="nucleotide sequence ID" value="NC_002516.2"/>
</dbReference>
<dbReference type="RefSeq" id="WP_003114089.1">
    <property type="nucleotide sequence ID" value="NZ_QZGE01000038.1"/>
</dbReference>
<dbReference type="SMR" id="Q9HX20"/>
<dbReference type="FunCoup" id="Q9HX20">
    <property type="interactions" value="546"/>
</dbReference>
<dbReference type="STRING" id="208964.PA4007"/>
<dbReference type="PaxDb" id="208964-PA4007"/>
<dbReference type="GeneID" id="878970"/>
<dbReference type="KEGG" id="pae:PA4007"/>
<dbReference type="PATRIC" id="fig|208964.12.peg.4199"/>
<dbReference type="PseudoCAP" id="PA4007"/>
<dbReference type="HOGENOM" id="CLU_030231_0_0_6"/>
<dbReference type="InParanoid" id="Q9HX20"/>
<dbReference type="OrthoDB" id="9809970at2"/>
<dbReference type="PhylomeDB" id="Q9HX20"/>
<dbReference type="BioCyc" id="PAER208964:G1FZ6-4080-MONOMER"/>
<dbReference type="SABIO-RK" id="Q9HX20"/>
<dbReference type="UniPathway" id="UPA00098">
    <property type="reaction ID" value="UER00360"/>
</dbReference>
<dbReference type="Proteomes" id="UP000002438">
    <property type="component" value="Chromosome"/>
</dbReference>
<dbReference type="GO" id="GO:0005737">
    <property type="term" value="C:cytoplasm"/>
    <property type="evidence" value="ECO:0007669"/>
    <property type="project" value="UniProtKB-SubCell"/>
</dbReference>
<dbReference type="GO" id="GO:0004350">
    <property type="term" value="F:glutamate-5-semialdehyde dehydrogenase activity"/>
    <property type="evidence" value="ECO:0000318"/>
    <property type="project" value="GO_Central"/>
</dbReference>
<dbReference type="GO" id="GO:0050661">
    <property type="term" value="F:NADP binding"/>
    <property type="evidence" value="ECO:0007669"/>
    <property type="project" value="InterPro"/>
</dbReference>
<dbReference type="GO" id="GO:0055129">
    <property type="term" value="P:L-proline biosynthetic process"/>
    <property type="evidence" value="ECO:0007669"/>
    <property type="project" value="UniProtKB-UniRule"/>
</dbReference>
<dbReference type="CDD" id="cd07079">
    <property type="entry name" value="ALDH_F18-19_ProA-GPR"/>
    <property type="match status" value="1"/>
</dbReference>
<dbReference type="FunFam" id="3.40.309.10:FF:000006">
    <property type="entry name" value="Gamma-glutamyl phosphate reductase"/>
    <property type="match status" value="1"/>
</dbReference>
<dbReference type="Gene3D" id="3.40.605.10">
    <property type="entry name" value="Aldehyde Dehydrogenase, Chain A, domain 1"/>
    <property type="match status" value="1"/>
</dbReference>
<dbReference type="Gene3D" id="3.40.309.10">
    <property type="entry name" value="Aldehyde Dehydrogenase, Chain A, domain 2"/>
    <property type="match status" value="1"/>
</dbReference>
<dbReference type="HAMAP" id="MF_00412">
    <property type="entry name" value="ProA"/>
    <property type="match status" value="1"/>
</dbReference>
<dbReference type="InterPro" id="IPR016161">
    <property type="entry name" value="Ald_DH/histidinol_DH"/>
</dbReference>
<dbReference type="InterPro" id="IPR016163">
    <property type="entry name" value="Ald_DH_C"/>
</dbReference>
<dbReference type="InterPro" id="IPR016162">
    <property type="entry name" value="Ald_DH_N"/>
</dbReference>
<dbReference type="InterPro" id="IPR015590">
    <property type="entry name" value="Aldehyde_DH_dom"/>
</dbReference>
<dbReference type="InterPro" id="IPR020593">
    <property type="entry name" value="G-glutamylP_reductase_CS"/>
</dbReference>
<dbReference type="InterPro" id="IPR012134">
    <property type="entry name" value="Glu-5-SA_DH"/>
</dbReference>
<dbReference type="InterPro" id="IPR000965">
    <property type="entry name" value="GPR_dom"/>
</dbReference>
<dbReference type="NCBIfam" id="NF001221">
    <property type="entry name" value="PRK00197.1"/>
    <property type="match status" value="1"/>
</dbReference>
<dbReference type="NCBIfam" id="TIGR00407">
    <property type="entry name" value="proA"/>
    <property type="match status" value="1"/>
</dbReference>
<dbReference type="PANTHER" id="PTHR11063:SF8">
    <property type="entry name" value="DELTA-1-PYRROLINE-5-CARBOXYLATE SYNTHASE"/>
    <property type="match status" value="1"/>
</dbReference>
<dbReference type="PANTHER" id="PTHR11063">
    <property type="entry name" value="GLUTAMATE SEMIALDEHYDE DEHYDROGENASE"/>
    <property type="match status" value="1"/>
</dbReference>
<dbReference type="Pfam" id="PF00171">
    <property type="entry name" value="Aldedh"/>
    <property type="match status" value="2"/>
</dbReference>
<dbReference type="PIRSF" id="PIRSF000151">
    <property type="entry name" value="GPR"/>
    <property type="match status" value="1"/>
</dbReference>
<dbReference type="SUPFAM" id="SSF53720">
    <property type="entry name" value="ALDH-like"/>
    <property type="match status" value="1"/>
</dbReference>
<dbReference type="PROSITE" id="PS01223">
    <property type="entry name" value="PROA"/>
    <property type="match status" value="1"/>
</dbReference>
<evidence type="ECO:0000255" key="1">
    <source>
        <dbReference type="HAMAP-Rule" id="MF_00412"/>
    </source>
</evidence>
<protein>
    <recommendedName>
        <fullName evidence="1">Gamma-glutamyl phosphate reductase</fullName>
        <shortName evidence="1">GPR</shortName>
        <ecNumber evidence="1">1.2.1.41</ecNumber>
    </recommendedName>
    <alternativeName>
        <fullName evidence="1">Glutamate-5-semialdehyde dehydrogenase</fullName>
    </alternativeName>
    <alternativeName>
        <fullName evidence="1">Glutamyl-gamma-semialdehyde dehydrogenase</fullName>
        <shortName evidence="1">GSA dehydrogenase</shortName>
    </alternativeName>
</protein>
<reference key="1">
    <citation type="journal article" date="2000" name="Nature">
        <title>Complete genome sequence of Pseudomonas aeruginosa PAO1, an opportunistic pathogen.</title>
        <authorList>
            <person name="Stover C.K."/>
            <person name="Pham X.-Q.T."/>
            <person name="Erwin A.L."/>
            <person name="Mizoguchi S.D."/>
            <person name="Warrener P."/>
            <person name="Hickey M.J."/>
            <person name="Brinkman F.S.L."/>
            <person name="Hufnagle W.O."/>
            <person name="Kowalik D.J."/>
            <person name="Lagrou M."/>
            <person name="Garber R.L."/>
            <person name="Goltry L."/>
            <person name="Tolentino E."/>
            <person name="Westbrock-Wadman S."/>
            <person name="Yuan Y."/>
            <person name="Brody L.L."/>
            <person name="Coulter S.N."/>
            <person name="Folger K.R."/>
            <person name="Kas A."/>
            <person name="Larbig K."/>
            <person name="Lim R.M."/>
            <person name="Smith K.A."/>
            <person name="Spencer D.H."/>
            <person name="Wong G.K.-S."/>
            <person name="Wu Z."/>
            <person name="Paulsen I.T."/>
            <person name="Reizer J."/>
            <person name="Saier M.H. Jr."/>
            <person name="Hancock R.E.W."/>
            <person name="Lory S."/>
            <person name="Olson M.V."/>
        </authorList>
    </citation>
    <scope>NUCLEOTIDE SEQUENCE [LARGE SCALE GENOMIC DNA]</scope>
    <source>
        <strain>ATCC 15692 / DSM 22644 / CIP 104116 / JCM 14847 / LMG 12228 / 1C / PRS 101 / PAO1</strain>
    </source>
</reference>
<name>PROA_PSEAE</name>
<accession>Q9HX20</accession>
<comment type="function">
    <text evidence="1">Catalyzes the NADPH-dependent reduction of L-glutamate 5-phosphate into L-glutamate 5-semialdehyde and phosphate. The product spontaneously undergoes cyclization to form 1-pyrroline-5-carboxylate.</text>
</comment>
<comment type="catalytic activity">
    <reaction evidence="1">
        <text>L-glutamate 5-semialdehyde + phosphate + NADP(+) = L-glutamyl 5-phosphate + NADPH + H(+)</text>
        <dbReference type="Rhea" id="RHEA:19541"/>
        <dbReference type="ChEBI" id="CHEBI:15378"/>
        <dbReference type="ChEBI" id="CHEBI:43474"/>
        <dbReference type="ChEBI" id="CHEBI:57783"/>
        <dbReference type="ChEBI" id="CHEBI:58066"/>
        <dbReference type="ChEBI" id="CHEBI:58274"/>
        <dbReference type="ChEBI" id="CHEBI:58349"/>
        <dbReference type="EC" id="1.2.1.41"/>
    </reaction>
</comment>
<comment type="pathway">
    <text evidence="1">Amino-acid biosynthesis; L-proline biosynthesis; L-glutamate 5-semialdehyde from L-glutamate: step 2/2.</text>
</comment>
<comment type="subcellular location">
    <subcellularLocation>
        <location evidence="1">Cytoplasm</location>
    </subcellularLocation>
</comment>
<comment type="similarity">
    <text evidence="1">Belongs to the gamma-glutamyl phosphate reductase family.</text>
</comment>
<organism>
    <name type="scientific">Pseudomonas aeruginosa (strain ATCC 15692 / DSM 22644 / CIP 104116 / JCM 14847 / LMG 12228 / 1C / PRS 101 / PAO1)</name>
    <dbReference type="NCBI Taxonomy" id="208964"/>
    <lineage>
        <taxon>Bacteria</taxon>
        <taxon>Pseudomonadati</taxon>
        <taxon>Pseudomonadota</taxon>
        <taxon>Gammaproteobacteria</taxon>
        <taxon>Pseudomonadales</taxon>
        <taxon>Pseudomonadaceae</taxon>
        <taxon>Pseudomonas</taxon>
    </lineage>
</organism>
<sequence length="421" mass="45044">MTESVLDYMSRLGRDARAASRLLARAATAQKNRALLAAADALDAARAELSHANEQDLAAGRANGLEPAMLDRLALTPARIDDMIEGLRQVATLPDPIGEIRDMRYVPSGIQIGKMRVPLGVVGIIYESRPNVTIDAASLCLKSGNATILRGGSEAIHSNQAIARCIQQGLAEAGLPAAAVQVVETTDRAAVGALISMPEYVDVIVPRGGKGLIERISREAKVPVIKHLDGICHVYIDVAADLDKAIRVADNAKTQRYAPCNTMETLLVHAGIAERVLPPLATIYREKGVELRGDAATRALLGADVLEATEEDWRTEYNAPILSIRIVDGLDAAIEHINTYGSQHTDAIITENFSDARRFLAEVDSASVMVNASTRFADGFEYGLGAEIGISTDKLHARGPVGLEGLTSEKYVVFGDGHVRT</sequence>
<gene>
    <name evidence="1" type="primary">proA</name>
    <name type="ordered locus">PA4007</name>
</gene>
<keyword id="KW-0028">Amino-acid biosynthesis</keyword>
<keyword id="KW-0963">Cytoplasm</keyword>
<keyword id="KW-0521">NADP</keyword>
<keyword id="KW-0560">Oxidoreductase</keyword>
<keyword id="KW-0641">Proline biosynthesis</keyword>
<keyword id="KW-1185">Reference proteome</keyword>
<feature type="chain" id="PRO_0000189767" description="Gamma-glutamyl phosphate reductase">
    <location>
        <begin position="1"/>
        <end position="421"/>
    </location>
</feature>